<proteinExistence type="inferred from homology"/>
<dbReference type="EC" id="5.3.1.16" evidence="1"/>
<dbReference type="EMBL" id="AY596297">
    <property type="protein sequence ID" value="AAV47331.1"/>
    <property type="status" value="ALT_INIT"/>
    <property type="molecule type" value="Genomic_DNA"/>
</dbReference>
<dbReference type="RefSeq" id="WP_011224283.1">
    <property type="nucleotide sequence ID" value="NC_006396.1"/>
</dbReference>
<dbReference type="SMR" id="Q5UZH1"/>
<dbReference type="STRING" id="272569.rrnAC2529"/>
<dbReference type="PaxDb" id="272569-rrnAC2529"/>
<dbReference type="EnsemblBacteria" id="AAV47331">
    <property type="protein sequence ID" value="AAV47331"/>
    <property type="gene ID" value="rrnAC2529"/>
</dbReference>
<dbReference type="GeneID" id="40153423"/>
<dbReference type="KEGG" id="hma:rrnAC2529"/>
<dbReference type="PATRIC" id="fig|272569.17.peg.3137"/>
<dbReference type="eggNOG" id="arCOG00618">
    <property type="taxonomic scope" value="Archaea"/>
</dbReference>
<dbReference type="HOGENOM" id="CLU_048577_1_1_2"/>
<dbReference type="UniPathway" id="UPA00031">
    <property type="reaction ID" value="UER00009"/>
</dbReference>
<dbReference type="Proteomes" id="UP000001169">
    <property type="component" value="Chromosome I"/>
</dbReference>
<dbReference type="GO" id="GO:0005737">
    <property type="term" value="C:cytoplasm"/>
    <property type="evidence" value="ECO:0007669"/>
    <property type="project" value="UniProtKB-SubCell"/>
</dbReference>
<dbReference type="GO" id="GO:0003949">
    <property type="term" value="F:1-(5-phosphoribosyl)-5-[(5-phosphoribosylamino)methylideneamino]imidazole-4-carboxamide isomerase activity"/>
    <property type="evidence" value="ECO:0007669"/>
    <property type="project" value="UniProtKB-UniRule"/>
</dbReference>
<dbReference type="GO" id="GO:0000105">
    <property type="term" value="P:L-histidine biosynthetic process"/>
    <property type="evidence" value="ECO:0007669"/>
    <property type="project" value="UniProtKB-UniRule"/>
</dbReference>
<dbReference type="GO" id="GO:0000162">
    <property type="term" value="P:L-tryptophan biosynthetic process"/>
    <property type="evidence" value="ECO:0007669"/>
    <property type="project" value="TreeGrafter"/>
</dbReference>
<dbReference type="CDD" id="cd04732">
    <property type="entry name" value="HisA"/>
    <property type="match status" value="1"/>
</dbReference>
<dbReference type="FunFam" id="3.20.20.70:FF:000009">
    <property type="entry name" value="1-(5-phosphoribosyl)-5-[(5-phosphoribosylamino)methylideneamino] imidazole-4-carboxamide isomerase"/>
    <property type="match status" value="1"/>
</dbReference>
<dbReference type="Gene3D" id="3.20.20.70">
    <property type="entry name" value="Aldolase class I"/>
    <property type="match status" value="1"/>
</dbReference>
<dbReference type="HAMAP" id="MF_01014">
    <property type="entry name" value="HisA"/>
    <property type="match status" value="1"/>
</dbReference>
<dbReference type="InterPro" id="IPR013785">
    <property type="entry name" value="Aldolase_TIM"/>
</dbReference>
<dbReference type="InterPro" id="IPR006062">
    <property type="entry name" value="His_biosynth"/>
</dbReference>
<dbReference type="InterPro" id="IPR006063">
    <property type="entry name" value="HisA_bact_arch"/>
</dbReference>
<dbReference type="InterPro" id="IPR044524">
    <property type="entry name" value="Isoase_HisA-like"/>
</dbReference>
<dbReference type="InterPro" id="IPR023016">
    <property type="entry name" value="Isoase_HisA-like_bact"/>
</dbReference>
<dbReference type="InterPro" id="IPR011060">
    <property type="entry name" value="RibuloseP-bd_barrel"/>
</dbReference>
<dbReference type="NCBIfam" id="TIGR00007">
    <property type="entry name" value="1-(5-phosphoribosyl)-5-[(5-phosphoribosylamino)methylideneamino]imidazole-4-carboxamide isomerase"/>
    <property type="match status" value="1"/>
</dbReference>
<dbReference type="NCBIfam" id="NF010112">
    <property type="entry name" value="PRK13585.1"/>
    <property type="match status" value="1"/>
</dbReference>
<dbReference type="PANTHER" id="PTHR43090">
    <property type="entry name" value="1-(5-PHOSPHORIBOSYL)-5-[(5-PHOSPHORIBOSYLAMINO)METHYLIDENEAMINO] IMIDAZOLE-4-CARBOXAMIDE ISOMERASE"/>
    <property type="match status" value="1"/>
</dbReference>
<dbReference type="PANTHER" id="PTHR43090:SF7">
    <property type="entry name" value="1-(5-PHOSPHORIBOSYL)-5-[(5-PHOSPHORIBOSYLAMINO)METHYLIDENEAMINO] IMIDAZOLE-4-CARBOXAMIDE ISOMERASE"/>
    <property type="match status" value="1"/>
</dbReference>
<dbReference type="Pfam" id="PF00977">
    <property type="entry name" value="His_biosynth"/>
    <property type="match status" value="1"/>
</dbReference>
<dbReference type="SUPFAM" id="SSF51366">
    <property type="entry name" value="Ribulose-phoshate binding barrel"/>
    <property type="match status" value="1"/>
</dbReference>
<reference key="1">
    <citation type="journal article" date="2004" name="Genome Res.">
        <title>Genome sequence of Haloarcula marismortui: a halophilic archaeon from the Dead Sea.</title>
        <authorList>
            <person name="Baliga N.S."/>
            <person name="Bonneau R."/>
            <person name="Facciotti M.T."/>
            <person name="Pan M."/>
            <person name="Glusman G."/>
            <person name="Deutsch E.W."/>
            <person name="Shannon P."/>
            <person name="Chiu Y."/>
            <person name="Weng R.S."/>
            <person name="Gan R.R."/>
            <person name="Hung P."/>
            <person name="Date S.V."/>
            <person name="Marcotte E."/>
            <person name="Hood L."/>
            <person name="Ng W.V."/>
        </authorList>
    </citation>
    <scope>NUCLEOTIDE SEQUENCE [LARGE SCALE GENOMIC DNA]</scope>
    <source>
        <strain>ATCC 43049 / DSM 3752 / JCM 8966 / VKM B-1809</strain>
    </source>
</reference>
<gene>
    <name evidence="1" type="primary">hisA</name>
    <name type="ordered locus">rrnAC2529</name>
</gene>
<sequence>MYPEFEVVPAVDMQDGQVVQLVGGERGTEKTYGDPVEAAQRWVDAGARTLHLVDLDGAFEGERQNAAAIDAVLDAVGADVDVQLGGGIRTAEDAVSLLDRGLDRVILGTAAVETPEIVGEISDEHPGSVLVSLDAKDGEVVVSGWTEGTGLDPADAAGRYADLGAGGILFTDVDVEGQLDGVRTDPVRRLVDSVDIPVIASGGVATINDVLALRSAGAAAVVVGSALYEGQFTLDAAIDALGESSE</sequence>
<feature type="chain" id="PRO_0000142089" description="1-(5-phosphoribosyl)-5-[(5-phosphoribosylamino)methylideneamino] imidazole-4-carboxamide isomerase">
    <location>
        <begin position="1"/>
        <end position="246"/>
    </location>
</feature>
<feature type="active site" description="Proton acceptor" evidence="1">
    <location>
        <position position="12"/>
    </location>
</feature>
<feature type="active site" description="Proton donor" evidence="1">
    <location>
        <position position="134"/>
    </location>
</feature>
<organism>
    <name type="scientific">Haloarcula marismortui (strain ATCC 43049 / DSM 3752 / JCM 8966 / VKM B-1809)</name>
    <name type="common">Halobacterium marismortui</name>
    <dbReference type="NCBI Taxonomy" id="272569"/>
    <lineage>
        <taxon>Archaea</taxon>
        <taxon>Methanobacteriati</taxon>
        <taxon>Methanobacteriota</taxon>
        <taxon>Stenosarchaea group</taxon>
        <taxon>Halobacteria</taxon>
        <taxon>Halobacteriales</taxon>
        <taxon>Haloarculaceae</taxon>
        <taxon>Haloarcula</taxon>
    </lineage>
</organism>
<evidence type="ECO:0000255" key="1">
    <source>
        <dbReference type="HAMAP-Rule" id="MF_01014"/>
    </source>
</evidence>
<evidence type="ECO:0000305" key="2"/>
<keyword id="KW-0028">Amino-acid biosynthesis</keyword>
<keyword id="KW-0963">Cytoplasm</keyword>
<keyword id="KW-0368">Histidine biosynthesis</keyword>
<keyword id="KW-0413">Isomerase</keyword>
<keyword id="KW-1185">Reference proteome</keyword>
<accession>Q5UZH1</accession>
<protein>
    <recommendedName>
        <fullName evidence="1">1-(5-phosphoribosyl)-5-[(5-phosphoribosylamino)methylideneamino] imidazole-4-carboxamide isomerase</fullName>
        <ecNumber evidence="1">5.3.1.16</ecNumber>
    </recommendedName>
    <alternativeName>
        <fullName evidence="1">Phosphoribosylformimino-5-aminoimidazole carboxamide ribotide isomerase</fullName>
    </alternativeName>
</protein>
<name>HIS4_HALMA</name>
<comment type="catalytic activity">
    <reaction evidence="1">
        <text>1-(5-phospho-beta-D-ribosyl)-5-[(5-phospho-beta-D-ribosylamino)methylideneamino]imidazole-4-carboxamide = 5-[(5-phospho-1-deoxy-D-ribulos-1-ylimino)methylamino]-1-(5-phospho-beta-D-ribosyl)imidazole-4-carboxamide</text>
        <dbReference type="Rhea" id="RHEA:15469"/>
        <dbReference type="ChEBI" id="CHEBI:58435"/>
        <dbReference type="ChEBI" id="CHEBI:58525"/>
        <dbReference type="EC" id="5.3.1.16"/>
    </reaction>
</comment>
<comment type="pathway">
    <text evidence="1">Amino-acid biosynthesis; L-histidine biosynthesis; L-histidine from 5-phospho-alpha-D-ribose 1-diphosphate: step 4/9.</text>
</comment>
<comment type="subcellular location">
    <subcellularLocation>
        <location evidence="1">Cytoplasm</location>
    </subcellularLocation>
</comment>
<comment type="similarity">
    <text evidence="1">Belongs to the HisA/HisF family.</text>
</comment>
<comment type="sequence caution" evidence="2">
    <conflict type="erroneous initiation">
        <sequence resource="EMBL-CDS" id="AAV47331"/>
    </conflict>
</comment>